<evidence type="ECO:0000250" key="1"/>
<evidence type="ECO:0000250" key="2">
    <source>
        <dbReference type="UniProtKB" id="Q9H7J1"/>
    </source>
</evidence>
<evidence type="ECO:0000255" key="3">
    <source>
        <dbReference type="PROSITE-ProRule" id="PRU00491"/>
    </source>
</evidence>
<evidence type="ECO:0000256" key="4">
    <source>
        <dbReference type="SAM" id="MobiDB-lite"/>
    </source>
</evidence>
<evidence type="ECO:0000269" key="5">
    <source>
    </source>
</evidence>
<evidence type="ECO:0000305" key="6"/>
<evidence type="ECO:0007744" key="7">
    <source>
    </source>
</evidence>
<gene>
    <name type="primary">Ppp1r3e</name>
</gene>
<accession>Q8BRJ4</accession>
<sequence>MSPERPPRTDIPRNLSFIAALTERAYYRSQRPSLEEESEEEPGEGGTRPGARSRAHVPGRGRRARSAPAGGGGARTARSRSPDTRKRVRFADALGLELAVVRRFRPGEPPRVPRHVQVQLQRDALRHFAPCPPRARGLQEARVALEPALEPGFAARLQAQRICLERADAGPLGVAGSARVLDLAYEKRVSVRWSADGWRSLRESPASYAGPAPSPPRADRFAFRLPAPPVGGTLLFALRYRVTGREFWDNNGGRDYALLGPEHPAGAGAAEPQGWIHFI</sequence>
<proteinExistence type="evidence at protein level"/>
<protein>
    <recommendedName>
        <fullName>Protein phosphatase 1 regulatory subunit 3E</fullName>
    </recommendedName>
</protein>
<feature type="chain" id="PRO_0000338639" description="Protein phosphatase 1 regulatory subunit 3E">
    <location>
        <begin position="1"/>
        <end position="279"/>
    </location>
</feature>
<feature type="domain" description="CBM21" evidence="3">
    <location>
        <begin position="154"/>
        <end position="259"/>
    </location>
</feature>
<feature type="region of interest" description="Disordered" evidence="4">
    <location>
        <begin position="28"/>
        <end position="87"/>
    </location>
</feature>
<feature type="region of interest" description="Glycogen-binding motif" evidence="1">
    <location>
        <begin position="176"/>
        <end position="198"/>
    </location>
</feature>
<feature type="region of interest" description="Substrate-binding motif" evidence="1">
    <location>
        <begin position="248"/>
        <end position="256"/>
    </location>
</feature>
<feature type="short sequence motif" description="PP1-binding motif">
    <location>
        <begin position="87"/>
        <end position="90"/>
    </location>
</feature>
<feature type="compositionally biased region" description="Basic residues" evidence="4">
    <location>
        <begin position="51"/>
        <end position="65"/>
    </location>
</feature>
<feature type="modified residue" description="Phosphoserine" evidence="7">
    <location>
        <position position="16"/>
    </location>
</feature>
<feature type="modified residue" description="Phosphoserine" evidence="2">
    <location>
        <position position="33"/>
    </location>
</feature>
<feature type="modified residue" description="Phosphoserine" evidence="2">
    <location>
        <position position="66"/>
    </location>
</feature>
<feature type="sequence conflict" description="In Ref. 2; AC116591." evidence="6" ref="2">
    <original>P</original>
    <variation>H</variation>
    <location>
        <position position="3"/>
    </location>
</feature>
<reference key="1">
    <citation type="journal article" date="2005" name="FEBS J.">
        <title>A novel glycogen-targeting subunit of protein phosphatase 1 that is regulated by insulin and shows differential tissue distribution in humans and rodents.</title>
        <authorList>
            <person name="Munro S."/>
            <person name="Ceulemans H."/>
            <person name="Bollen M."/>
            <person name="Diplexcito J."/>
            <person name="Cohen P.T.W."/>
        </authorList>
    </citation>
    <scope>NUCLEOTIDE SEQUENCE [MRNA]</scope>
    <scope>MOTIF</scope>
    <scope>FUNCTION</scope>
</reference>
<reference key="2">
    <citation type="journal article" date="2009" name="PLoS Biol.">
        <title>Lineage-specific biology revealed by a finished genome assembly of the mouse.</title>
        <authorList>
            <person name="Church D.M."/>
            <person name="Goodstadt L."/>
            <person name="Hillier L.W."/>
            <person name="Zody M.C."/>
            <person name="Goldstein S."/>
            <person name="She X."/>
            <person name="Bult C.J."/>
            <person name="Agarwala R."/>
            <person name="Cherry J.L."/>
            <person name="DiCuccio M."/>
            <person name="Hlavina W."/>
            <person name="Kapustin Y."/>
            <person name="Meric P."/>
            <person name="Maglott D."/>
            <person name="Birtle Z."/>
            <person name="Marques A.C."/>
            <person name="Graves T."/>
            <person name="Zhou S."/>
            <person name="Teague B."/>
            <person name="Potamousis K."/>
            <person name="Churas C."/>
            <person name="Place M."/>
            <person name="Herschleb J."/>
            <person name="Runnheim R."/>
            <person name="Forrest D."/>
            <person name="Amos-Landgraf J."/>
            <person name="Schwartz D.C."/>
            <person name="Cheng Z."/>
            <person name="Lindblad-Toh K."/>
            <person name="Eichler E.E."/>
            <person name="Ponting C.P."/>
        </authorList>
    </citation>
    <scope>NUCLEOTIDE SEQUENCE [LARGE SCALE GENOMIC DNA]</scope>
    <source>
        <strain>C57BL/6J</strain>
    </source>
</reference>
<reference key="3">
    <citation type="journal article" date="2005" name="Science">
        <title>The transcriptional landscape of the mammalian genome.</title>
        <authorList>
            <person name="Carninci P."/>
            <person name="Kasukawa T."/>
            <person name="Katayama S."/>
            <person name="Gough J."/>
            <person name="Frith M.C."/>
            <person name="Maeda N."/>
            <person name="Oyama R."/>
            <person name="Ravasi T."/>
            <person name="Lenhard B."/>
            <person name="Wells C."/>
            <person name="Kodzius R."/>
            <person name="Shimokawa K."/>
            <person name="Bajic V.B."/>
            <person name="Brenner S.E."/>
            <person name="Batalov S."/>
            <person name="Forrest A.R."/>
            <person name="Zavolan M."/>
            <person name="Davis M.J."/>
            <person name="Wilming L.G."/>
            <person name="Aidinis V."/>
            <person name="Allen J.E."/>
            <person name="Ambesi-Impiombato A."/>
            <person name="Apweiler R."/>
            <person name="Aturaliya R.N."/>
            <person name="Bailey T.L."/>
            <person name="Bansal M."/>
            <person name="Baxter L."/>
            <person name="Beisel K.W."/>
            <person name="Bersano T."/>
            <person name="Bono H."/>
            <person name="Chalk A.M."/>
            <person name="Chiu K.P."/>
            <person name="Choudhary V."/>
            <person name="Christoffels A."/>
            <person name="Clutterbuck D.R."/>
            <person name="Crowe M.L."/>
            <person name="Dalla E."/>
            <person name="Dalrymple B.P."/>
            <person name="de Bono B."/>
            <person name="Della Gatta G."/>
            <person name="di Bernardo D."/>
            <person name="Down T."/>
            <person name="Engstrom P."/>
            <person name="Fagiolini M."/>
            <person name="Faulkner G."/>
            <person name="Fletcher C.F."/>
            <person name="Fukushima T."/>
            <person name="Furuno M."/>
            <person name="Futaki S."/>
            <person name="Gariboldi M."/>
            <person name="Georgii-Hemming P."/>
            <person name="Gingeras T.R."/>
            <person name="Gojobori T."/>
            <person name="Green R.E."/>
            <person name="Gustincich S."/>
            <person name="Harbers M."/>
            <person name="Hayashi Y."/>
            <person name="Hensch T.K."/>
            <person name="Hirokawa N."/>
            <person name="Hill D."/>
            <person name="Huminiecki L."/>
            <person name="Iacono M."/>
            <person name="Ikeo K."/>
            <person name="Iwama A."/>
            <person name="Ishikawa T."/>
            <person name="Jakt M."/>
            <person name="Kanapin A."/>
            <person name="Katoh M."/>
            <person name="Kawasawa Y."/>
            <person name="Kelso J."/>
            <person name="Kitamura H."/>
            <person name="Kitano H."/>
            <person name="Kollias G."/>
            <person name="Krishnan S.P."/>
            <person name="Kruger A."/>
            <person name="Kummerfeld S.K."/>
            <person name="Kurochkin I.V."/>
            <person name="Lareau L.F."/>
            <person name="Lazarevic D."/>
            <person name="Lipovich L."/>
            <person name="Liu J."/>
            <person name="Liuni S."/>
            <person name="McWilliam S."/>
            <person name="Madan Babu M."/>
            <person name="Madera M."/>
            <person name="Marchionni L."/>
            <person name="Matsuda H."/>
            <person name="Matsuzawa S."/>
            <person name="Miki H."/>
            <person name="Mignone F."/>
            <person name="Miyake S."/>
            <person name="Morris K."/>
            <person name="Mottagui-Tabar S."/>
            <person name="Mulder N."/>
            <person name="Nakano N."/>
            <person name="Nakauchi H."/>
            <person name="Ng P."/>
            <person name="Nilsson R."/>
            <person name="Nishiguchi S."/>
            <person name="Nishikawa S."/>
            <person name="Nori F."/>
            <person name="Ohara O."/>
            <person name="Okazaki Y."/>
            <person name="Orlando V."/>
            <person name="Pang K.C."/>
            <person name="Pavan W.J."/>
            <person name="Pavesi G."/>
            <person name="Pesole G."/>
            <person name="Petrovsky N."/>
            <person name="Piazza S."/>
            <person name="Reed J."/>
            <person name="Reid J.F."/>
            <person name="Ring B.Z."/>
            <person name="Ringwald M."/>
            <person name="Rost B."/>
            <person name="Ruan Y."/>
            <person name="Salzberg S.L."/>
            <person name="Sandelin A."/>
            <person name="Schneider C."/>
            <person name="Schoenbach C."/>
            <person name="Sekiguchi K."/>
            <person name="Semple C.A."/>
            <person name="Seno S."/>
            <person name="Sessa L."/>
            <person name="Sheng Y."/>
            <person name="Shibata Y."/>
            <person name="Shimada H."/>
            <person name="Shimada K."/>
            <person name="Silva D."/>
            <person name="Sinclair B."/>
            <person name="Sperling S."/>
            <person name="Stupka E."/>
            <person name="Sugiura K."/>
            <person name="Sultana R."/>
            <person name="Takenaka Y."/>
            <person name="Taki K."/>
            <person name="Tammoja K."/>
            <person name="Tan S.L."/>
            <person name="Tang S."/>
            <person name="Taylor M.S."/>
            <person name="Tegner J."/>
            <person name="Teichmann S.A."/>
            <person name="Ueda H.R."/>
            <person name="van Nimwegen E."/>
            <person name="Verardo R."/>
            <person name="Wei C.L."/>
            <person name="Yagi K."/>
            <person name="Yamanishi H."/>
            <person name="Zabarovsky E."/>
            <person name="Zhu S."/>
            <person name="Zimmer A."/>
            <person name="Hide W."/>
            <person name="Bult C."/>
            <person name="Grimmond S.M."/>
            <person name="Teasdale R.D."/>
            <person name="Liu E.T."/>
            <person name="Brusic V."/>
            <person name="Quackenbush J."/>
            <person name="Wahlestedt C."/>
            <person name="Mattick J.S."/>
            <person name="Hume D.A."/>
            <person name="Kai C."/>
            <person name="Sasaki D."/>
            <person name="Tomaru Y."/>
            <person name="Fukuda S."/>
            <person name="Kanamori-Katayama M."/>
            <person name="Suzuki M."/>
            <person name="Aoki J."/>
            <person name="Arakawa T."/>
            <person name="Iida J."/>
            <person name="Imamura K."/>
            <person name="Itoh M."/>
            <person name="Kato T."/>
            <person name="Kawaji H."/>
            <person name="Kawagashira N."/>
            <person name="Kawashima T."/>
            <person name="Kojima M."/>
            <person name="Kondo S."/>
            <person name="Konno H."/>
            <person name="Nakano K."/>
            <person name="Ninomiya N."/>
            <person name="Nishio T."/>
            <person name="Okada M."/>
            <person name="Plessy C."/>
            <person name="Shibata K."/>
            <person name="Shiraki T."/>
            <person name="Suzuki S."/>
            <person name="Tagami M."/>
            <person name="Waki K."/>
            <person name="Watahiki A."/>
            <person name="Okamura-Oho Y."/>
            <person name="Suzuki H."/>
            <person name="Kawai J."/>
            <person name="Hayashizaki Y."/>
        </authorList>
    </citation>
    <scope>NUCLEOTIDE SEQUENCE [LARGE SCALE MRNA] OF 199-279</scope>
    <source>
        <strain>C57BL/6J</strain>
        <tissue>Brain cortex</tissue>
    </source>
</reference>
<reference key="4">
    <citation type="journal article" date="2010" name="Cell">
        <title>A tissue-specific atlas of mouse protein phosphorylation and expression.</title>
        <authorList>
            <person name="Huttlin E.L."/>
            <person name="Jedrychowski M.P."/>
            <person name="Elias J.E."/>
            <person name="Goswami T."/>
            <person name="Rad R."/>
            <person name="Beausoleil S.A."/>
            <person name="Villen J."/>
            <person name="Haas W."/>
            <person name="Sowa M.E."/>
            <person name="Gygi S.P."/>
        </authorList>
    </citation>
    <scope>PHOSPHORYLATION [LARGE SCALE ANALYSIS] AT SER-16</scope>
    <scope>IDENTIFICATION BY MASS SPECTROMETRY [LARGE SCALE ANALYSIS]</scope>
    <source>
        <tissue>Brain</tissue>
    </source>
</reference>
<dbReference type="EMBL" id="AC116591">
    <property type="status" value="NOT_ANNOTATED_CDS"/>
    <property type="molecule type" value="Genomic_DNA"/>
</dbReference>
<dbReference type="EMBL" id="AK044095">
    <property type="protein sequence ID" value="BAC31772.1"/>
    <property type="status" value="ALT_SEQ"/>
    <property type="molecule type" value="mRNA"/>
</dbReference>
<dbReference type="CCDS" id="CCDS56958.1"/>
<dbReference type="SMR" id="Q8BRJ4"/>
<dbReference type="FunCoup" id="Q8BRJ4">
    <property type="interactions" value="67"/>
</dbReference>
<dbReference type="STRING" id="10090.ENSMUSP00000134894"/>
<dbReference type="iPTMnet" id="Q8BRJ4"/>
<dbReference type="PhosphoSitePlus" id="Q8BRJ4"/>
<dbReference type="PaxDb" id="10090-ENSMUSP00000134894"/>
<dbReference type="ProteomicsDB" id="291842"/>
<dbReference type="AGR" id="MGI:2145790"/>
<dbReference type="MGI" id="MGI:2145790">
    <property type="gene designation" value="Ppp1r3e"/>
</dbReference>
<dbReference type="eggNOG" id="KOG3986">
    <property type="taxonomic scope" value="Eukaryota"/>
</dbReference>
<dbReference type="InParanoid" id="Q8BRJ4"/>
<dbReference type="PRO" id="PR:Q8BRJ4"/>
<dbReference type="Proteomes" id="UP000000589">
    <property type="component" value="Unplaced"/>
</dbReference>
<dbReference type="RNAct" id="Q8BRJ4">
    <property type="molecule type" value="protein"/>
</dbReference>
<dbReference type="GO" id="GO:0005977">
    <property type="term" value="P:glycogen metabolic process"/>
    <property type="evidence" value="ECO:0007669"/>
    <property type="project" value="UniProtKB-KW"/>
</dbReference>
<dbReference type="FunFam" id="2.60.40.2440:FF:000002">
    <property type="entry name" value="Protein phosphatase 1 regulatory subunit 3E"/>
    <property type="match status" value="1"/>
</dbReference>
<dbReference type="Gene3D" id="2.60.40.2440">
    <property type="entry name" value="Carbohydrate binding type-21 domain"/>
    <property type="match status" value="1"/>
</dbReference>
<dbReference type="InterPro" id="IPR005036">
    <property type="entry name" value="CBM21_dom"/>
</dbReference>
<dbReference type="InterPro" id="IPR038175">
    <property type="entry name" value="CBM21_dom_sf"/>
</dbReference>
<dbReference type="InterPro" id="IPR050782">
    <property type="entry name" value="PP1_regulatory_subunit_3"/>
</dbReference>
<dbReference type="PANTHER" id="PTHR12307">
    <property type="entry name" value="PROTEIN PHOSPHATASE 1 REGULATORY SUBUNIT"/>
    <property type="match status" value="1"/>
</dbReference>
<dbReference type="PANTHER" id="PTHR12307:SF20">
    <property type="entry name" value="PROTEIN PHOSPHATASE 1 REGULATORY SUBUNIT 3E"/>
    <property type="match status" value="1"/>
</dbReference>
<dbReference type="Pfam" id="PF03370">
    <property type="entry name" value="CBM_21"/>
    <property type="match status" value="1"/>
</dbReference>
<dbReference type="PROSITE" id="PS51159">
    <property type="entry name" value="CBM21"/>
    <property type="match status" value="1"/>
</dbReference>
<keyword id="KW-0119">Carbohydrate metabolism</keyword>
<keyword id="KW-0321">Glycogen metabolism</keyword>
<keyword id="KW-0597">Phosphoprotein</keyword>
<keyword id="KW-1185">Reference proteome</keyword>
<organism>
    <name type="scientific">Mus musculus</name>
    <name type="common">Mouse</name>
    <dbReference type="NCBI Taxonomy" id="10090"/>
    <lineage>
        <taxon>Eukaryota</taxon>
        <taxon>Metazoa</taxon>
        <taxon>Chordata</taxon>
        <taxon>Craniata</taxon>
        <taxon>Vertebrata</taxon>
        <taxon>Euteleostomi</taxon>
        <taxon>Mammalia</taxon>
        <taxon>Eutheria</taxon>
        <taxon>Euarchontoglires</taxon>
        <taxon>Glires</taxon>
        <taxon>Rodentia</taxon>
        <taxon>Myomorpha</taxon>
        <taxon>Muroidea</taxon>
        <taxon>Muridae</taxon>
        <taxon>Murinae</taxon>
        <taxon>Mus</taxon>
        <taxon>Mus</taxon>
    </lineage>
</organism>
<comment type="function">
    <text evidence="5">Acts as a glycogen-targeting subunit for PP1. PP1 is involved in glycogen metabolism and contributes to the activation of glycogen synthase leading to an increase in glycogen synthesis.</text>
</comment>
<comment type="domain">
    <text>The CBM21 domain is known to be involved in the localization to glycogen and is characteristic of some regulatory subunit of phosphatase complexes.</text>
</comment>
<comment type="sequence caution" evidence="6">
    <conflict type="erroneous translation">
        <sequence resource="EMBL-CDS" id="BAC31772"/>
    </conflict>
    <text>Wrong choice of frame.</text>
</comment>
<name>PPR3E_MOUSE</name>